<keyword id="KW-0175">Coiled coil</keyword>
<keyword id="KW-1185">Reference proteome</keyword>
<name>YR435_MIMIV</name>
<accession>Q5UQN1</accession>
<organismHost>
    <name type="scientific">Acanthamoeba polyphaga</name>
    <name type="common">Amoeba</name>
    <dbReference type="NCBI Taxonomy" id="5757"/>
</organismHost>
<evidence type="ECO:0000255" key="1"/>
<evidence type="ECO:0000256" key="2">
    <source>
        <dbReference type="SAM" id="MobiDB-lite"/>
    </source>
</evidence>
<reference key="1">
    <citation type="journal article" date="2004" name="Science">
        <title>The 1.2-megabase genome sequence of Mimivirus.</title>
        <authorList>
            <person name="Raoult D."/>
            <person name="Audic S."/>
            <person name="Robert C."/>
            <person name="Abergel C."/>
            <person name="Renesto P."/>
            <person name="Ogata H."/>
            <person name="La Scola B."/>
            <person name="Susan M."/>
            <person name="Claverie J.-M."/>
        </authorList>
    </citation>
    <scope>NUCLEOTIDE SEQUENCE [LARGE SCALE GENOMIC DNA]</scope>
    <source>
        <strain>Rowbotham-Bradford</strain>
    </source>
</reference>
<dbReference type="EMBL" id="AY653733">
    <property type="protein sequence ID" value="AAV50704.1"/>
    <property type="molecule type" value="Genomic_DNA"/>
</dbReference>
<dbReference type="SMR" id="Q5UQN1"/>
<dbReference type="KEGG" id="vg:9925056"/>
<dbReference type="Proteomes" id="UP000001134">
    <property type="component" value="Genome"/>
</dbReference>
<dbReference type="InterPro" id="IPR043872">
    <property type="entry name" value="DUF5832"/>
</dbReference>
<dbReference type="Pfam" id="PF19150">
    <property type="entry name" value="DUF5832"/>
    <property type="match status" value="2"/>
</dbReference>
<sequence length="407" mass="47400">MNKSNNTSNRRAERLTTIGDDAPFGNINFFTISFLSPEKVEKTKYLDIRGFKIHNGYNTLEVANSDAKELRKKYIDHDVYVTQLGKVYSWDDPTKTDSIEYEDEKLNELEKTRKEHTDKVKLMQQQFKNEFEIIRPNINTDRLNNQKKRLRDKLYSKGLISKAEYEMAETLDKPTNEIKDIAVCQKQAEEEAVKMANEDYLDENPPVGIKFGCISIYSPKFIRGLKQFCFKLRGLFESQEELEDRVNKLHKIYPNDRIHTFEVGKWIPYSDTIDDNEVSLNYLNYSMKCYLDNVANEREEFEKRKDNLQKQNEEAAKITKRKNRQEKRREKRLALKEAKNTAKTSVSSIPDTSSTTTSTNSTPTNTKSNSVQNINHQGPVELPDNMDPAINESDKEAIQNILDYIEN</sequence>
<organism>
    <name type="scientific">Acanthamoeba polyphaga mimivirus</name>
    <name type="common">APMV</name>
    <dbReference type="NCBI Taxonomy" id="212035"/>
    <lineage>
        <taxon>Viruses</taxon>
        <taxon>Varidnaviria</taxon>
        <taxon>Bamfordvirae</taxon>
        <taxon>Nucleocytoviricota</taxon>
        <taxon>Megaviricetes</taxon>
        <taxon>Imitervirales</taxon>
        <taxon>Mimiviridae</taxon>
        <taxon>Megamimivirinae</taxon>
        <taxon>Mimivirus</taxon>
        <taxon>Mimivirus bradfordmassiliense</taxon>
    </lineage>
</organism>
<protein>
    <recommendedName>
        <fullName>Uncharacterized protein R435</fullName>
    </recommendedName>
</protein>
<feature type="chain" id="PRO_0000247386" description="Uncharacterized protein R435">
    <location>
        <begin position="1"/>
        <end position="407"/>
    </location>
</feature>
<feature type="region of interest" description="Disordered" evidence="2">
    <location>
        <begin position="302"/>
        <end position="394"/>
    </location>
</feature>
<feature type="coiled-coil region" evidence="1">
    <location>
        <begin position="96"/>
        <end position="130"/>
    </location>
</feature>
<feature type="coiled-coil region" evidence="1">
    <location>
        <begin position="287"/>
        <end position="345"/>
    </location>
</feature>
<feature type="compositionally biased region" description="Basic and acidic residues" evidence="2">
    <location>
        <begin position="302"/>
        <end position="317"/>
    </location>
</feature>
<feature type="compositionally biased region" description="Basic residues" evidence="2">
    <location>
        <begin position="318"/>
        <end position="331"/>
    </location>
</feature>
<feature type="compositionally biased region" description="Low complexity" evidence="2">
    <location>
        <begin position="344"/>
        <end position="370"/>
    </location>
</feature>
<gene>
    <name type="ordered locus">MIMI_R435</name>
</gene>
<proteinExistence type="predicted"/>